<accession>Q90W22</accession>
<dbReference type="EMBL" id="AB058510">
    <property type="protein sequence ID" value="BAB71718.1"/>
    <property type="molecule type" value="mRNA"/>
</dbReference>
<dbReference type="SMR" id="Q90W22"/>
<dbReference type="GO" id="GO:0005576">
    <property type="term" value="C:extracellular region"/>
    <property type="evidence" value="ECO:0007669"/>
    <property type="project" value="UniProtKB-SubCell"/>
</dbReference>
<dbReference type="GO" id="GO:0005179">
    <property type="term" value="F:hormone activity"/>
    <property type="evidence" value="ECO:0007669"/>
    <property type="project" value="UniProtKB-KW"/>
</dbReference>
<gene>
    <name type="primary">GHRL</name>
</gene>
<protein>
    <recommendedName>
        <fullName>Ghrelin</fullName>
    </recommendedName>
    <component>
        <recommendedName>
            <fullName>Ghrelin-27</fullName>
        </recommendedName>
    </component>
    <component>
        <recommendedName>
            <fullName>Ghrelin-28</fullName>
        </recommendedName>
    </component>
</protein>
<proteinExistence type="evidence at protein level"/>
<comment type="function">
    <text evidence="3">Ligand for growth hormone secretagogue receptor type 1 (GHSR). Induces the release of growth hormone from the pituitary. Has an appetite-stimulating effect, induces adiposity and stimulates gastric acid secretion. Involved in growth regulation.</text>
</comment>
<comment type="subcellular location">
    <subcellularLocation>
        <location evidence="4">Secreted</location>
    </subcellularLocation>
</comment>
<comment type="tissue specificity">
    <text evidence="3">High levels in stomach. Moderate levels in small intestine, pancreas and testis. Low levels in heart, lung and gall bladder.</text>
</comment>
<comment type="PTM">
    <text evidence="1 3">O-octanoylated by GOAT/MBOAT4 (By similarity). O-octanoylation or O-decanoylation is essential for activity. The O-decanoylated form ghrelin-27-C10 differs in the length of the carbon backbone of the carboxylic acid bound to Thr-27. 33% of frog ghrelin is O-decanoylated (PubMed:11546772).</text>
</comment>
<comment type="PTM">
    <text evidence="3">80% of frog ghrelin has Asn-52 cleaved from its C-terminus giving rise to ghrelin-27.</text>
</comment>
<comment type="mass spectrometry" mass="3308.5" error="0.9" method="Electrospray" evidence="3">
    <molecule>Ghrelin-28</molecule>
    <text>Ghrelin-28-C8, O-octanoylated form.</text>
</comment>
<comment type="mass spectrometry" mass="3225.3" error="1.7" method="Electrospray" evidence="3">
    <molecule>Ghrelin-27</molecule>
    <text>Ghrelin-27-C10, O-decanoylated form.</text>
</comment>
<comment type="mass spectrometry" mass="3196.1" error="0.9" method="Electrospray" evidence="3">
    <molecule>Ghrelin-27</molecule>
    <text>Ghrelin-28-C8, O-octanoylated form.</text>
</comment>
<comment type="similarity">
    <text evidence="2">Belongs to the motilin family.</text>
</comment>
<feature type="signal peptide" evidence="3">
    <location>
        <begin position="1"/>
        <end position="24"/>
    </location>
</feature>
<feature type="peptide" id="PRO_0000019219" description="Ghrelin-28" evidence="3">
    <location>
        <begin position="25"/>
        <end position="52"/>
    </location>
</feature>
<feature type="peptide" id="PRO_0000019220" description="Ghrelin-27" evidence="3">
    <location>
        <begin position="25"/>
        <end position="51"/>
    </location>
</feature>
<feature type="propeptide" id="PRO_0000019221" description="Removed in mature form">
    <location>
        <begin position="55"/>
        <end position="114"/>
    </location>
</feature>
<feature type="lipid moiety-binding region" description="O-decanoyl threonine; alternate" evidence="3">
    <location>
        <position position="27"/>
    </location>
</feature>
<feature type="lipid moiety-binding region" description="O-octanoyl threonine; alternate" evidence="3">
    <location>
        <position position="27"/>
    </location>
</feature>
<evidence type="ECO:0000250" key="1">
    <source>
        <dbReference type="UniProtKB" id="Q9EQX0"/>
    </source>
</evidence>
<evidence type="ECO:0000255" key="2"/>
<evidence type="ECO:0000269" key="3">
    <source>
    </source>
</evidence>
<evidence type="ECO:0000305" key="4"/>
<evidence type="ECO:0000312" key="5">
    <source>
        <dbReference type="EMBL" id="BAB71718.1"/>
    </source>
</evidence>
<keyword id="KW-0165">Cleavage on pair of basic residues</keyword>
<keyword id="KW-0903">Direct protein sequencing</keyword>
<keyword id="KW-0372">Hormone</keyword>
<keyword id="KW-0449">Lipoprotein</keyword>
<keyword id="KW-0964">Secreted</keyword>
<keyword id="KW-0732">Signal</keyword>
<reference evidence="4 5" key="1">
    <citation type="journal article" date="2001" name="J. Biol. Chem.">
        <title>Bullfrog ghrelin is modified by n-octanoic acid at its third threonine residue.</title>
        <authorList>
            <person name="Kaiya H."/>
            <person name="Kojima M."/>
            <person name="Hosoda H."/>
            <person name="Koda A."/>
            <person name="Yamamoto K."/>
            <person name="Kitajima Y."/>
            <person name="Matsumoto M."/>
            <person name="Minamitake Y."/>
            <person name="Kikuyama S."/>
            <person name="Kangawa K."/>
        </authorList>
    </citation>
    <scope>NUCLEOTIDE SEQUENCE [MRNA]</scope>
    <scope>PROTEIN SEQUENCE OF 25-52</scope>
    <scope>FUNCTION</scope>
    <scope>TISSUE SPECIFICITY</scope>
    <scope>ACYLATION AT THR-27</scope>
    <scope>MASS SPECTROMETRY</scope>
    <source>
        <tissue evidence="5">Stomach</tissue>
    </source>
</reference>
<name>GHRL_AQUCT</name>
<sequence length="114" mass="12756">MNFGKAAIFGVVLFCLLWTEGAQAGLTFLSPADMQKIAERQSQNKLRHGNMNRRGVEDDLAGEEIGVTFPLDMKMTQEQFQKQRAAVQDFLYSSLLSLGSVQDTEDKNENPQSQ</sequence>
<organism>
    <name type="scientific">Aquarana catesbeiana</name>
    <name type="common">American bullfrog</name>
    <name type="synonym">Rana catesbeiana</name>
    <dbReference type="NCBI Taxonomy" id="8400"/>
    <lineage>
        <taxon>Eukaryota</taxon>
        <taxon>Metazoa</taxon>
        <taxon>Chordata</taxon>
        <taxon>Craniata</taxon>
        <taxon>Vertebrata</taxon>
        <taxon>Euteleostomi</taxon>
        <taxon>Amphibia</taxon>
        <taxon>Batrachia</taxon>
        <taxon>Anura</taxon>
        <taxon>Neobatrachia</taxon>
        <taxon>Ranoidea</taxon>
        <taxon>Ranidae</taxon>
        <taxon>Aquarana</taxon>
    </lineage>
</organism>